<feature type="chain" id="PRO_1000003915" description="Small ribosomal subunit protein uS2">
    <location>
        <begin position="1"/>
        <end position="246"/>
    </location>
</feature>
<organism>
    <name type="scientific">Burkholderia lata (strain ATCC 17760 / DSM 23089 / LMG 22485 / NCIMB 9086 / R18194 / 383)</name>
    <dbReference type="NCBI Taxonomy" id="482957"/>
    <lineage>
        <taxon>Bacteria</taxon>
        <taxon>Pseudomonadati</taxon>
        <taxon>Pseudomonadota</taxon>
        <taxon>Betaproteobacteria</taxon>
        <taxon>Burkholderiales</taxon>
        <taxon>Burkholderiaceae</taxon>
        <taxon>Burkholderia</taxon>
        <taxon>Burkholderia cepacia complex</taxon>
    </lineage>
</organism>
<keyword id="KW-0687">Ribonucleoprotein</keyword>
<keyword id="KW-0689">Ribosomal protein</keyword>
<dbReference type="EMBL" id="CP000151">
    <property type="protein sequence ID" value="ABB08923.1"/>
    <property type="molecule type" value="Genomic_DNA"/>
</dbReference>
<dbReference type="RefSeq" id="WP_011352461.1">
    <property type="nucleotide sequence ID" value="NZ_CABVQP010000005.1"/>
</dbReference>
<dbReference type="SMR" id="Q39F43"/>
<dbReference type="GeneID" id="93143971"/>
<dbReference type="KEGG" id="bur:Bcep18194_A5329"/>
<dbReference type="PATRIC" id="fig|482957.22.peg.2278"/>
<dbReference type="HOGENOM" id="CLU_040318_1_2_4"/>
<dbReference type="Proteomes" id="UP000002705">
    <property type="component" value="Chromosome 1"/>
</dbReference>
<dbReference type="GO" id="GO:0022627">
    <property type="term" value="C:cytosolic small ribosomal subunit"/>
    <property type="evidence" value="ECO:0007669"/>
    <property type="project" value="TreeGrafter"/>
</dbReference>
<dbReference type="GO" id="GO:0003735">
    <property type="term" value="F:structural constituent of ribosome"/>
    <property type="evidence" value="ECO:0007669"/>
    <property type="project" value="InterPro"/>
</dbReference>
<dbReference type="GO" id="GO:0006412">
    <property type="term" value="P:translation"/>
    <property type="evidence" value="ECO:0007669"/>
    <property type="project" value="UniProtKB-UniRule"/>
</dbReference>
<dbReference type="CDD" id="cd01425">
    <property type="entry name" value="RPS2"/>
    <property type="match status" value="1"/>
</dbReference>
<dbReference type="FunFam" id="1.10.287.610:FF:000001">
    <property type="entry name" value="30S ribosomal protein S2"/>
    <property type="match status" value="1"/>
</dbReference>
<dbReference type="Gene3D" id="3.40.50.10490">
    <property type="entry name" value="Glucose-6-phosphate isomerase like protein, domain 1"/>
    <property type="match status" value="1"/>
</dbReference>
<dbReference type="Gene3D" id="1.10.287.610">
    <property type="entry name" value="Helix hairpin bin"/>
    <property type="match status" value="1"/>
</dbReference>
<dbReference type="HAMAP" id="MF_00291_B">
    <property type="entry name" value="Ribosomal_uS2_B"/>
    <property type="match status" value="1"/>
</dbReference>
<dbReference type="InterPro" id="IPR001865">
    <property type="entry name" value="Ribosomal_uS2"/>
</dbReference>
<dbReference type="InterPro" id="IPR005706">
    <property type="entry name" value="Ribosomal_uS2_bac/mit/plastid"/>
</dbReference>
<dbReference type="InterPro" id="IPR018130">
    <property type="entry name" value="Ribosomal_uS2_CS"/>
</dbReference>
<dbReference type="InterPro" id="IPR023591">
    <property type="entry name" value="Ribosomal_uS2_flav_dom_sf"/>
</dbReference>
<dbReference type="NCBIfam" id="TIGR01011">
    <property type="entry name" value="rpsB_bact"/>
    <property type="match status" value="1"/>
</dbReference>
<dbReference type="PANTHER" id="PTHR12534">
    <property type="entry name" value="30S RIBOSOMAL PROTEIN S2 PROKARYOTIC AND ORGANELLAR"/>
    <property type="match status" value="1"/>
</dbReference>
<dbReference type="PANTHER" id="PTHR12534:SF0">
    <property type="entry name" value="SMALL RIBOSOMAL SUBUNIT PROTEIN US2M"/>
    <property type="match status" value="1"/>
</dbReference>
<dbReference type="Pfam" id="PF00318">
    <property type="entry name" value="Ribosomal_S2"/>
    <property type="match status" value="1"/>
</dbReference>
<dbReference type="PRINTS" id="PR00395">
    <property type="entry name" value="RIBOSOMALS2"/>
</dbReference>
<dbReference type="SUPFAM" id="SSF52313">
    <property type="entry name" value="Ribosomal protein S2"/>
    <property type="match status" value="1"/>
</dbReference>
<dbReference type="PROSITE" id="PS00962">
    <property type="entry name" value="RIBOSOMAL_S2_1"/>
    <property type="match status" value="1"/>
</dbReference>
<proteinExistence type="inferred from homology"/>
<gene>
    <name evidence="1" type="primary">rpsB</name>
    <name type="ordered locus">Bcep18194_A5329</name>
</gene>
<reference key="1">
    <citation type="submission" date="2005-10" db="EMBL/GenBank/DDBJ databases">
        <title>Complete sequence of chromosome 1 of Burkholderia sp. 383.</title>
        <authorList>
            <consortium name="US DOE Joint Genome Institute"/>
            <person name="Copeland A."/>
            <person name="Lucas S."/>
            <person name="Lapidus A."/>
            <person name="Barry K."/>
            <person name="Detter J.C."/>
            <person name="Glavina T."/>
            <person name="Hammon N."/>
            <person name="Israni S."/>
            <person name="Pitluck S."/>
            <person name="Chain P."/>
            <person name="Malfatti S."/>
            <person name="Shin M."/>
            <person name="Vergez L."/>
            <person name="Schmutz J."/>
            <person name="Larimer F."/>
            <person name="Land M."/>
            <person name="Kyrpides N."/>
            <person name="Lykidis A."/>
            <person name="Richardson P."/>
        </authorList>
    </citation>
    <scope>NUCLEOTIDE SEQUENCE [LARGE SCALE GENOMIC DNA]</scope>
    <source>
        <strain>ATCC 17760 / DSM 23089 / LMG 22485 / NCIMB 9086 / R18194 / 383</strain>
    </source>
</reference>
<comment type="similarity">
    <text evidence="1">Belongs to the universal ribosomal protein uS2 family.</text>
</comment>
<accession>Q39F43</accession>
<protein>
    <recommendedName>
        <fullName evidence="1">Small ribosomal subunit protein uS2</fullName>
    </recommendedName>
    <alternativeName>
        <fullName evidence="2">30S ribosomal protein S2</fullName>
    </alternativeName>
</protein>
<sequence>MAVTMRQMLEAGVHFGHQTRFWNPKMAPFIFGHRNKIHIINLEKTLPMFTDAQKYVRQLAANRGTILFVGTKRQSRDTIAQEAQRAGMPYVNARWLGGMMTNFKTLKVSIKRLKDMEAAVESGETEKMSKKEALLFEREIAKLQKSIGGVKDMGGIPDAIFVVDVGYHKIAVTEANKLGVPVIAVVDTNHSPEGVDYVIPGNDDSSKAVALYAEGVADAILEGRANAVNEVVQAARGDDEYVEENA</sequence>
<name>RS2_BURL3</name>
<evidence type="ECO:0000255" key="1">
    <source>
        <dbReference type="HAMAP-Rule" id="MF_00291"/>
    </source>
</evidence>
<evidence type="ECO:0000305" key="2"/>